<keyword id="KW-0997">Cell inner membrane</keyword>
<keyword id="KW-1003">Cell membrane</keyword>
<keyword id="KW-0472">Membrane</keyword>
<keyword id="KW-1185">Reference proteome</keyword>
<keyword id="KW-0812">Transmembrane</keyword>
<keyword id="KW-1133">Transmembrane helix</keyword>
<sequence>MSKEHTTEHLRAELKSLSDTLEEVLSSSGEKSKEELSKIRSKAEQALKQSRYRLGETGDAIAKQTRVAAARADEYVRENPWTGVGIGAAIGVVLGVLLSRR</sequence>
<protein>
    <recommendedName>
        <fullName>Uncharacterized protein YqjD</fullName>
    </recommendedName>
</protein>
<evidence type="ECO:0000250" key="1"/>
<evidence type="ECO:0000255" key="2"/>
<evidence type="ECO:0000305" key="3"/>
<comment type="subunit">
    <text evidence="1">Binds to 70S and 100S ribosomes, probably via the 30S subunit.</text>
</comment>
<comment type="subcellular location">
    <subcellularLocation>
        <location evidence="3">Cell inner membrane</location>
        <topology evidence="3">Single-pass membrane protein</topology>
    </subcellularLocation>
    <text evidence="1">Localizes to one cell pole in stationary phase.</text>
</comment>
<comment type="similarity">
    <text evidence="3">Belongs to the ElaB/YgaM/YqjD family.</text>
</comment>
<feature type="chain" id="PRO_0000169431" description="Uncharacterized protein YqjD">
    <location>
        <begin position="1"/>
        <end position="101"/>
    </location>
</feature>
<feature type="transmembrane region" description="Helical" evidence="2">
    <location>
        <begin position="81"/>
        <end position="98"/>
    </location>
</feature>
<dbReference type="EMBL" id="AE005674">
    <property type="protein sequence ID" value="AAN44612.2"/>
    <property type="molecule type" value="Genomic_DNA"/>
</dbReference>
<dbReference type="EMBL" id="AE014073">
    <property type="protein sequence ID" value="AAP18426.1"/>
    <property type="molecule type" value="Genomic_DNA"/>
</dbReference>
<dbReference type="RefSeq" id="NP_708905.2">
    <property type="nucleotide sequence ID" value="NC_004337.2"/>
</dbReference>
<dbReference type="RefSeq" id="WP_000031415.1">
    <property type="nucleotide sequence ID" value="NZ_WPGW01000077.1"/>
</dbReference>
<dbReference type="SMR" id="P64584"/>
<dbReference type="STRING" id="198214.SF3141"/>
<dbReference type="PaxDb" id="198214-SF3141"/>
<dbReference type="GeneID" id="1025270"/>
<dbReference type="KEGG" id="sfl:SF3141"/>
<dbReference type="KEGG" id="sfx:S3349"/>
<dbReference type="PATRIC" id="fig|198214.7.peg.3729"/>
<dbReference type="HOGENOM" id="CLU_132623_4_2_6"/>
<dbReference type="Proteomes" id="UP000001006">
    <property type="component" value="Chromosome"/>
</dbReference>
<dbReference type="Proteomes" id="UP000002673">
    <property type="component" value="Chromosome"/>
</dbReference>
<dbReference type="GO" id="GO:0005886">
    <property type="term" value="C:plasma membrane"/>
    <property type="evidence" value="ECO:0007669"/>
    <property type="project" value="UniProtKB-SubCell"/>
</dbReference>
<dbReference type="GO" id="GO:0043022">
    <property type="term" value="F:ribosome binding"/>
    <property type="evidence" value="ECO:0007669"/>
    <property type="project" value="InterPro"/>
</dbReference>
<dbReference type="InterPro" id="IPR043605">
    <property type="entry name" value="DUF883_C"/>
</dbReference>
<dbReference type="InterPro" id="IPR043604">
    <property type="entry name" value="DUF883_N"/>
</dbReference>
<dbReference type="InterPro" id="IPR010279">
    <property type="entry name" value="YqjD/ElaB"/>
</dbReference>
<dbReference type="PANTHER" id="PTHR35893:SF3">
    <property type="entry name" value="INNER MEMBRANE PROTEIN"/>
    <property type="match status" value="1"/>
</dbReference>
<dbReference type="PANTHER" id="PTHR35893">
    <property type="entry name" value="INNER MEMBRANE PROTEIN-RELATED"/>
    <property type="match status" value="1"/>
</dbReference>
<dbReference type="Pfam" id="PF05957">
    <property type="entry name" value="DUF883"/>
    <property type="match status" value="1"/>
</dbReference>
<dbReference type="Pfam" id="PF19029">
    <property type="entry name" value="DUF883_C"/>
    <property type="match status" value="1"/>
</dbReference>
<gene>
    <name type="primary">yqjD</name>
    <name type="ordered locus">SF3141</name>
    <name type="ordered locus">S3349</name>
</gene>
<reference key="1">
    <citation type="journal article" date="2002" name="Nucleic Acids Res.">
        <title>Genome sequence of Shigella flexneri 2a: insights into pathogenicity through comparison with genomes of Escherichia coli K12 and O157.</title>
        <authorList>
            <person name="Jin Q."/>
            <person name="Yuan Z."/>
            <person name="Xu J."/>
            <person name="Wang Y."/>
            <person name="Shen Y."/>
            <person name="Lu W."/>
            <person name="Wang J."/>
            <person name="Liu H."/>
            <person name="Yang J."/>
            <person name="Yang F."/>
            <person name="Zhang X."/>
            <person name="Zhang J."/>
            <person name="Yang G."/>
            <person name="Wu H."/>
            <person name="Qu D."/>
            <person name="Dong J."/>
            <person name="Sun L."/>
            <person name="Xue Y."/>
            <person name="Zhao A."/>
            <person name="Gao Y."/>
            <person name="Zhu J."/>
            <person name="Kan B."/>
            <person name="Ding K."/>
            <person name="Chen S."/>
            <person name="Cheng H."/>
            <person name="Yao Z."/>
            <person name="He B."/>
            <person name="Chen R."/>
            <person name="Ma D."/>
            <person name="Qiang B."/>
            <person name="Wen Y."/>
            <person name="Hou Y."/>
            <person name="Yu J."/>
        </authorList>
    </citation>
    <scope>NUCLEOTIDE SEQUENCE [LARGE SCALE GENOMIC DNA]</scope>
    <source>
        <strain>301 / Serotype 2a</strain>
    </source>
</reference>
<reference key="2">
    <citation type="journal article" date="2003" name="Infect. Immun.">
        <title>Complete genome sequence and comparative genomics of Shigella flexneri serotype 2a strain 2457T.</title>
        <authorList>
            <person name="Wei J."/>
            <person name="Goldberg M.B."/>
            <person name="Burland V."/>
            <person name="Venkatesan M.M."/>
            <person name="Deng W."/>
            <person name="Fournier G."/>
            <person name="Mayhew G.F."/>
            <person name="Plunkett G. III"/>
            <person name="Rose D.J."/>
            <person name="Darling A."/>
            <person name="Mau B."/>
            <person name="Perna N.T."/>
            <person name="Payne S.M."/>
            <person name="Runyen-Janecky L.J."/>
            <person name="Zhou S."/>
            <person name="Schwartz D.C."/>
            <person name="Blattner F.R."/>
        </authorList>
    </citation>
    <scope>NUCLEOTIDE SEQUENCE [LARGE SCALE GENOMIC DNA]</scope>
    <source>
        <strain>ATCC 700930 / 2457T / Serotype 2a</strain>
    </source>
</reference>
<accession>P64584</accession>
<accession>P42617</accession>
<proteinExistence type="inferred from homology"/>
<name>YQJD_SHIFL</name>
<organism>
    <name type="scientific">Shigella flexneri</name>
    <dbReference type="NCBI Taxonomy" id="623"/>
    <lineage>
        <taxon>Bacteria</taxon>
        <taxon>Pseudomonadati</taxon>
        <taxon>Pseudomonadota</taxon>
        <taxon>Gammaproteobacteria</taxon>
        <taxon>Enterobacterales</taxon>
        <taxon>Enterobacteriaceae</taxon>
        <taxon>Shigella</taxon>
    </lineage>
</organism>